<feature type="chain" id="PRO_1000054945" description="Small ribosomal subunit protein uS17">
    <location>
        <begin position="1"/>
        <end position="92"/>
    </location>
</feature>
<proteinExistence type="inferred from homology"/>
<protein>
    <recommendedName>
        <fullName evidence="1">Small ribosomal subunit protein uS17</fullName>
    </recommendedName>
    <alternativeName>
        <fullName evidence="2">30S ribosomal protein S17</fullName>
    </alternativeName>
</protein>
<comment type="function">
    <text evidence="1">One of the primary rRNA binding proteins, it binds specifically to the 5'-end of 16S ribosomal RNA.</text>
</comment>
<comment type="subunit">
    <text evidence="1">Part of the 30S ribosomal subunit.</text>
</comment>
<comment type="similarity">
    <text evidence="1">Belongs to the universal ribosomal protein uS17 family.</text>
</comment>
<keyword id="KW-0687">Ribonucleoprotein</keyword>
<keyword id="KW-0689">Ribosomal protein</keyword>
<keyword id="KW-0694">RNA-binding</keyword>
<keyword id="KW-0699">rRNA-binding</keyword>
<name>RS17_CORGB</name>
<accession>A4QBJ1</accession>
<sequence length="92" mass="10580">MSEANVNNQEKSTRKVRTGYVVSDKMQKTIVVEVEDRKQHALYGKILRSAKKVKAHDEEQIAGIGDLVRIEETRPLSKDKNYRLIEIVEKAK</sequence>
<evidence type="ECO:0000255" key="1">
    <source>
        <dbReference type="HAMAP-Rule" id="MF_01345"/>
    </source>
</evidence>
<evidence type="ECO:0000305" key="2"/>
<gene>
    <name evidence="1" type="primary">rpsQ</name>
    <name type="ordered locus">cgR_0617</name>
</gene>
<dbReference type="EMBL" id="AP009044">
    <property type="protein sequence ID" value="BAF53588.1"/>
    <property type="molecule type" value="Genomic_DNA"/>
</dbReference>
<dbReference type="RefSeq" id="WP_003854306.1">
    <property type="nucleotide sequence ID" value="NC_009342.1"/>
</dbReference>
<dbReference type="SMR" id="A4QBJ1"/>
<dbReference type="GeneID" id="1021513"/>
<dbReference type="KEGG" id="cgt:cgR_0617"/>
<dbReference type="HOGENOM" id="CLU_073626_1_0_11"/>
<dbReference type="PhylomeDB" id="A4QBJ1"/>
<dbReference type="Proteomes" id="UP000006698">
    <property type="component" value="Chromosome"/>
</dbReference>
<dbReference type="GO" id="GO:0022627">
    <property type="term" value="C:cytosolic small ribosomal subunit"/>
    <property type="evidence" value="ECO:0007669"/>
    <property type="project" value="TreeGrafter"/>
</dbReference>
<dbReference type="GO" id="GO:0019843">
    <property type="term" value="F:rRNA binding"/>
    <property type="evidence" value="ECO:0007669"/>
    <property type="project" value="UniProtKB-UniRule"/>
</dbReference>
<dbReference type="GO" id="GO:0003735">
    <property type="term" value="F:structural constituent of ribosome"/>
    <property type="evidence" value="ECO:0007669"/>
    <property type="project" value="InterPro"/>
</dbReference>
<dbReference type="GO" id="GO:0006412">
    <property type="term" value="P:translation"/>
    <property type="evidence" value="ECO:0007669"/>
    <property type="project" value="UniProtKB-UniRule"/>
</dbReference>
<dbReference type="CDD" id="cd00364">
    <property type="entry name" value="Ribosomal_uS17"/>
    <property type="match status" value="1"/>
</dbReference>
<dbReference type="Gene3D" id="2.40.50.140">
    <property type="entry name" value="Nucleic acid-binding proteins"/>
    <property type="match status" value="1"/>
</dbReference>
<dbReference type="HAMAP" id="MF_01345_B">
    <property type="entry name" value="Ribosomal_uS17_B"/>
    <property type="match status" value="1"/>
</dbReference>
<dbReference type="InterPro" id="IPR012340">
    <property type="entry name" value="NA-bd_OB-fold"/>
</dbReference>
<dbReference type="InterPro" id="IPR000266">
    <property type="entry name" value="Ribosomal_uS17"/>
</dbReference>
<dbReference type="InterPro" id="IPR019984">
    <property type="entry name" value="Ribosomal_uS17_bact/chlr"/>
</dbReference>
<dbReference type="InterPro" id="IPR019979">
    <property type="entry name" value="Ribosomal_uS17_CS"/>
</dbReference>
<dbReference type="NCBIfam" id="NF004123">
    <property type="entry name" value="PRK05610.1"/>
    <property type="match status" value="1"/>
</dbReference>
<dbReference type="NCBIfam" id="TIGR03635">
    <property type="entry name" value="uS17_bact"/>
    <property type="match status" value="1"/>
</dbReference>
<dbReference type="PANTHER" id="PTHR10744">
    <property type="entry name" value="40S RIBOSOMAL PROTEIN S11 FAMILY MEMBER"/>
    <property type="match status" value="1"/>
</dbReference>
<dbReference type="PANTHER" id="PTHR10744:SF1">
    <property type="entry name" value="SMALL RIBOSOMAL SUBUNIT PROTEIN US17M"/>
    <property type="match status" value="1"/>
</dbReference>
<dbReference type="Pfam" id="PF00366">
    <property type="entry name" value="Ribosomal_S17"/>
    <property type="match status" value="1"/>
</dbReference>
<dbReference type="PRINTS" id="PR00973">
    <property type="entry name" value="RIBOSOMALS17"/>
</dbReference>
<dbReference type="SUPFAM" id="SSF50249">
    <property type="entry name" value="Nucleic acid-binding proteins"/>
    <property type="match status" value="1"/>
</dbReference>
<dbReference type="PROSITE" id="PS00056">
    <property type="entry name" value="RIBOSOMAL_S17"/>
    <property type="match status" value="1"/>
</dbReference>
<organism>
    <name type="scientific">Corynebacterium glutamicum (strain R)</name>
    <dbReference type="NCBI Taxonomy" id="340322"/>
    <lineage>
        <taxon>Bacteria</taxon>
        <taxon>Bacillati</taxon>
        <taxon>Actinomycetota</taxon>
        <taxon>Actinomycetes</taxon>
        <taxon>Mycobacteriales</taxon>
        <taxon>Corynebacteriaceae</taxon>
        <taxon>Corynebacterium</taxon>
    </lineage>
</organism>
<reference key="1">
    <citation type="journal article" date="2007" name="Microbiology">
        <title>Comparative analysis of the Corynebacterium glutamicum group and complete genome sequence of strain R.</title>
        <authorList>
            <person name="Yukawa H."/>
            <person name="Omumasaba C.A."/>
            <person name="Nonaka H."/>
            <person name="Kos P."/>
            <person name="Okai N."/>
            <person name="Suzuki N."/>
            <person name="Suda M."/>
            <person name="Tsuge Y."/>
            <person name="Watanabe J."/>
            <person name="Ikeda Y."/>
            <person name="Vertes A.A."/>
            <person name="Inui M."/>
        </authorList>
    </citation>
    <scope>NUCLEOTIDE SEQUENCE [LARGE SCALE GENOMIC DNA]</scope>
    <source>
        <strain>R</strain>
    </source>
</reference>